<dbReference type="EC" id="4.2.1.149" evidence="1"/>
<dbReference type="EMBL" id="CP000880">
    <property type="protein sequence ID" value="ABX22776.1"/>
    <property type="molecule type" value="Genomic_DNA"/>
</dbReference>
<dbReference type="SMR" id="A9MR28"/>
<dbReference type="STRING" id="41514.SARI_02930"/>
<dbReference type="KEGG" id="ses:SARI_02930"/>
<dbReference type="HOGENOM" id="CLU_009834_7_6_6"/>
<dbReference type="UniPathway" id="UPA00117"/>
<dbReference type="Proteomes" id="UP000002084">
    <property type="component" value="Chromosome"/>
</dbReference>
<dbReference type="GO" id="GO:0016836">
    <property type="term" value="F:hydro-lyase activity"/>
    <property type="evidence" value="ECO:0007669"/>
    <property type="project" value="UniProtKB-UniRule"/>
</dbReference>
<dbReference type="GO" id="GO:0008735">
    <property type="term" value="F:L-carnitine CoA-transferase activity"/>
    <property type="evidence" value="ECO:0007669"/>
    <property type="project" value="RHEA"/>
</dbReference>
<dbReference type="GO" id="GO:0009437">
    <property type="term" value="P:carnitine metabolic process"/>
    <property type="evidence" value="ECO:0007669"/>
    <property type="project" value="UniProtKB-UniRule"/>
</dbReference>
<dbReference type="GO" id="GO:0006635">
    <property type="term" value="P:fatty acid beta-oxidation"/>
    <property type="evidence" value="ECO:0007669"/>
    <property type="project" value="TreeGrafter"/>
</dbReference>
<dbReference type="CDD" id="cd06558">
    <property type="entry name" value="crotonase-like"/>
    <property type="match status" value="1"/>
</dbReference>
<dbReference type="FunFam" id="1.10.12.10:FF:000005">
    <property type="entry name" value="Carnitinyl-CoA dehydratase"/>
    <property type="match status" value="1"/>
</dbReference>
<dbReference type="FunFam" id="3.90.226.10:FF:000009">
    <property type="entry name" value="Carnitinyl-CoA dehydratase"/>
    <property type="match status" value="1"/>
</dbReference>
<dbReference type="Gene3D" id="3.90.226.10">
    <property type="entry name" value="2-enoyl-CoA Hydratase, Chain A, domain 1"/>
    <property type="match status" value="1"/>
</dbReference>
<dbReference type="Gene3D" id="1.10.12.10">
    <property type="entry name" value="Lyase 2-enoyl-coa Hydratase, Chain A, domain 2"/>
    <property type="match status" value="1"/>
</dbReference>
<dbReference type="HAMAP" id="MF_01051">
    <property type="entry name" value="CaiD"/>
    <property type="match status" value="1"/>
</dbReference>
<dbReference type="InterPro" id="IPR022852">
    <property type="entry name" value="Carnitinyl_CoA_dehydratase"/>
</dbReference>
<dbReference type="InterPro" id="IPR029045">
    <property type="entry name" value="ClpP/crotonase-like_dom_sf"/>
</dbReference>
<dbReference type="InterPro" id="IPR018376">
    <property type="entry name" value="Enoyl-CoA_hyd/isom_CS"/>
</dbReference>
<dbReference type="InterPro" id="IPR001753">
    <property type="entry name" value="Enoyl-CoA_hydra/iso"/>
</dbReference>
<dbReference type="InterPro" id="IPR014748">
    <property type="entry name" value="Enoyl-CoA_hydra_C"/>
</dbReference>
<dbReference type="NCBIfam" id="NF002936">
    <property type="entry name" value="PRK03580.1"/>
    <property type="match status" value="1"/>
</dbReference>
<dbReference type="PANTHER" id="PTHR11941:SF54">
    <property type="entry name" value="ENOYL-COA HYDRATASE, MITOCHONDRIAL"/>
    <property type="match status" value="1"/>
</dbReference>
<dbReference type="PANTHER" id="PTHR11941">
    <property type="entry name" value="ENOYL-COA HYDRATASE-RELATED"/>
    <property type="match status" value="1"/>
</dbReference>
<dbReference type="Pfam" id="PF00378">
    <property type="entry name" value="ECH_1"/>
    <property type="match status" value="1"/>
</dbReference>
<dbReference type="SUPFAM" id="SSF52096">
    <property type="entry name" value="ClpP/crotonase"/>
    <property type="match status" value="1"/>
</dbReference>
<dbReference type="PROSITE" id="PS00166">
    <property type="entry name" value="ENOYL_COA_HYDRATASE"/>
    <property type="match status" value="1"/>
</dbReference>
<keyword id="KW-0456">Lyase</keyword>
<keyword id="KW-1185">Reference proteome</keyword>
<feature type="chain" id="PRO_1000084426" description="Carnitinyl-CoA dehydratase">
    <location>
        <begin position="1"/>
        <end position="261"/>
    </location>
</feature>
<feature type="active site" description="Nucleophile" evidence="1">
    <location>
        <position position="111"/>
    </location>
</feature>
<feature type="active site" description="Proton acceptor" evidence="1">
    <location>
        <position position="131"/>
    </location>
</feature>
<sequence>MSESLRLTRNGPILEITLDRPKANAIDARTSFAMGEAFLSFRDDPHLRVAIITGAGEKFFSAGWDLKAAAEGEAPDADFGPGGFAGLTELFDLNKPVIAAVNGYAFGGGFELALAADFIICADHASFALPEAKLGIVPDSGGVLRLPKILPPAIVNDMVMTGRRMTAEEALRWGVVNRVVSPHELLDSARELARQLVQSAPLAVAALKEITRTTRDMSVEEGYRYIRSGSLRHYPAVLHSEDALEGPLAFAEKRDPEWKGH</sequence>
<name>CAID_SALAR</name>
<organism>
    <name type="scientific">Salmonella arizonae (strain ATCC BAA-731 / CDC346-86 / RSK2980)</name>
    <dbReference type="NCBI Taxonomy" id="41514"/>
    <lineage>
        <taxon>Bacteria</taxon>
        <taxon>Pseudomonadati</taxon>
        <taxon>Pseudomonadota</taxon>
        <taxon>Gammaproteobacteria</taxon>
        <taxon>Enterobacterales</taxon>
        <taxon>Enterobacteriaceae</taxon>
        <taxon>Salmonella</taxon>
    </lineage>
</organism>
<reference key="1">
    <citation type="submission" date="2007-11" db="EMBL/GenBank/DDBJ databases">
        <authorList>
            <consortium name="The Salmonella enterica serovar Arizonae Genome Sequencing Project"/>
            <person name="McClelland M."/>
            <person name="Sanderson E.K."/>
            <person name="Porwollik S."/>
            <person name="Spieth J."/>
            <person name="Clifton W.S."/>
            <person name="Fulton R."/>
            <person name="Chunyan W."/>
            <person name="Wollam A."/>
            <person name="Shah N."/>
            <person name="Pepin K."/>
            <person name="Bhonagiri V."/>
            <person name="Nash W."/>
            <person name="Johnson M."/>
            <person name="Thiruvilangam P."/>
            <person name="Wilson R."/>
        </authorList>
    </citation>
    <scope>NUCLEOTIDE SEQUENCE [LARGE SCALE GENOMIC DNA]</scope>
    <source>
        <strain>ATCC BAA-731 / CDC346-86 / RSK2980</strain>
    </source>
</reference>
<accession>A9MR28</accession>
<comment type="function">
    <text evidence="1">Catalyzes the reversible dehydration of L-carnitinyl-CoA to crotonobetainyl-CoA.</text>
</comment>
<comment type="catalytic activity">
    <reaction evidence="1">
        <text>(R)-carnitinyl-CoA = crotonobetainyl-CoA + H2O</text>
        <dbReference type="Rhea" id="RHEA:28338"/>
        <dbReference type="ChEBI" id="CHEBI:15377"/>
        <dbReference type="ChEBI" id="CHEBI:60932"/>
        <dbReference type="ChEBI" id="CHEBI:60933"/>
        <dbReference type="EC" id="4.2.1.149"/>
    </reaction>
</comment>
<comment type="pathway">
    <text evidence="1">Amine and polyamine metabolism; carnitine metabolism.</text>
</comment>
<comment type="similarity">
    <text evidence="1">Belongs to the enoyl-CoA hydratase/isomerase family.</text>
</comment>
<proteinExistence type="inferred from homology"/>
<evidence type="ECO:0000255" key="1">
    <source>
        <dbReference type="HAMAP-Rule" id="MF_01051"/>
    </source>
</evidence>
<gene>
    <name evidence="1" type="primary">caiD</name>
    <name type="ordered locus">SARI_02930</name>
</gene>
<protein>
    <recommendedName>
        <fullName evidence="1">Carnitinyl-CoA dehydratase</fullName>
        <ecNumber evidence="1">4.2.1.149</ecNumber>
    </recommendedName>
    <alternativeName>
        <fullName evidence="1">Crotonobetainyl-CoA hydratase</fullName>
    </alternativeName>
</protein>